<gene>
    <name evidence="1" type="primary">hutI</name>
    <name type="ordered locus">STH3191</name>
</gene>
<reference key="1">
    <citation type="journal article" date="2004" name="Nucleic Acids Res.">
        <title>Genome sequence of Symbiobacterium thermophilum, an uncultivable bacterium that depends on microbial commensalism.</title>
        <authorList>
            <person name="Ueda K."/>
            <person name="Yamashita A."/>
            <person name="Ishikawa J."/>
            <person name="Shimada M."/>
            <person name="Watsuji T."/>
            <person name="Morimura K."/>
            <person name="Ikeda H."/>
            <person name="Hattori M."/>
            <person name="Beppu T."/>
        </authorList>
    </citation>
    <scope>NUCLEOTIDE SEQUENCE [LARGE SCALE GENOMIC DNA]</scope>
    <source>
        <strain>DSM 24528 / JCM 14929 / IAM 14863 / T</strain>
    </source>
</reference>
<sequence length="425" mass="44842">MRPVDLLIVGAGELVTMAGGPRRGERMKDAAVIPGGALAARDGRIVAVGPEDEVLRTVETGPDTRVIDARGRAVIPGFVDPHTHLCFAGDRAEEFALRLGGATYQEIAARGGGILETVRATRAASQAELVELGLARLDQLALNGTTTVEVKSGYGLSLADELKQLRAIRAMARRHPLTVVPTFMGAHEVPPEYRSRREAYVDLLVEEMLPAVAAEPGLARFADVFTEAGVFSVAESRRILERAKALGFGVKVHADELSDLGGAALAAELGAISAEHLLHASDEALAKLAEAGTVAVCLPGTSFCLMNAPYARARRMIELGCTVALGSDYNPGSCPAYAMPFIITLACMHLGLNPSEALAAATINAAAAIGMEAEVGSLEVGKLADVVILSTPTHWHIPYHMGMGVVAKVVKRGRLIVDEGKVRRR</sequence>
<evidence type="ECO:0000255" key="1">
    <source>
        <dbReference type="HAMAP-Rule" id="MF_00372"/>
    </source>
</evidence>
<organism>
    <name type="scientific">Symbiobacterium thermophilum (strain DSM 24528 / JCM 14929 / IAM 14863 / T)</name>
    <dbReference type="NCBI Taxonomy" id="292459"/>
    <lineage>
        <taxon>Bacteria</taxon>
        <taxon>Bacillati</taxon>
        <taxon>Bacillota</taxon>
        <taxon>Clostridia</taxon>
        <taxon>Eubacteriales</taxon>
        <taxon>Symbiobacteriaceae</taxon>
        <taxon>Symbiobacterium</taxon>
    </lineage>
</organism>
<comment type="function">
    <text evidence="1">Catalyzes the hydrolytic cleavage of the carbon-nitrogen bond in imidazolone-5-propanoate to yield N-formimidoyl-L-glutamate. It is the third step in the universal histidine degradation pathway.</text>
</comment>
<comment type="catalytic activity">
    <reaction evidence="1">
        <text>4-imidazolone-5-propanoate + H2O = N-formimidoyl-L-glutamate</text>
        <dbReference type="Rhea" id="RHEA:23660"/>
        <dbReference type="ChEBI" id="CHEBI:15377"/>
        <dbReference type="ChEBI" id="CHEBI:58928"/>
        <dbReference type="ChEBI" id="CHEBI:77893"/>
        <dbReference type="EC" id="3.5.2.7"/>
    </reaction>
</comment>
<comment type="cofactor">
    <cofactor evidence="1">
        <name>Zn(2+)</name>
        <dbReference type="ChEBI" id="CHEBI:29105"/>
    </cofactor>
    <cofactor evidence="1">
        <name>Fe(3+)</name>
        <dbReference type="ChEBI" id="CHEBI:29034"/>
    </cofactor>
    <text evidence="1">Binds 1 zinc or iron ion per subunit.</text>
</comment>
<comment type="pathway">
    <text evidence="1">Amino-acid degradation; L-histidine degradation into L-glutamate; N-formimidoyl-L-glutamate from L-histidine: step 3/3.</text>
</comment>
<comment type="subcellular location">
    <subcellularLocation>
        <location evidence="1">Cytoplasm</location>
    </subcellularLocation>
</comment>
<comment type="similarity">
    <text evidence="1">Belongs to the metallo-dependent hydrolases superfamily. HutI family.</text>
</comment>
<protein>
    <recommendedName>
        <fullName evidence="1">Imidazolonepropionase</fullName>
        <ecNumber evidence="1">3.5.2.7</ecNumber>
    </recommendedName>
    <alternativeName>
        <fullName evidence="1">Imidazolone-5-propionate hydrolase</fullName>
    </alternativeName>
</protein>
<keyword id="KW-0963">Cytoplasm</keyword>
<keyword id="KW-0369">Histidine metabolism</keyword>
<keyword id="KW-0378">Hydrolase</keyword>
<keyword id="KW-0408">Iron</keyword>
<keyword id="KW-0479">Metal-binding</keyword>
<keyword id="KW-1185">Reference proteome</keyword>
<keyword id="KW-0862">Zinc</keyword>
<accession>Q67JH7</accession>
<proteinExistence type="inferred from homology"/>
<name>HUTI_SYMTH</name>
<dbReference type="EC" id="3.5.2.7" evidence="1"/>
<dbReference type="EMBL" id="AP006840">
    <property type="protein sequence ID" value="BAD42173.1"/>
    <property type="molecule type" value="Genomic_DNA"/>
</dbReference>
<dbReference type="SMR" id="Q67JH7"/>
<dbReference type="STRING" id="292459.STH3191"/>
<dbReference type="KEGG" id="sth:STH3191"/>
<dbReference type="eggNOG" id="COG1228">
    <property type="taxonomic scope" value="Bacteria"/>
</dbReference>
<dbReference type="HOGENOM" id="CLU_041647_0_1_9"/>
<dbReference type="OrthoDB" id="9776455at2"/>
<dbReference type="UniPathway" id="UPA00379">
    <property type="reaction ID" value="UER00551"/>
</dbReference>
<dbReference type="Proteomes" id="UP000000417">
    <property type="component" value="Chromosome"/>
</dbReference>
<dbReference type="GO" id="GO:0005737">
    <property type="term" value="C:cytoplasm"/>
    <property type="evidence" value="ECO:0007669"/>
    <property type="project" value="UniProtKB-SubCell"/>
</dbReference>
<dbReference type="GO" id="GO:0050480">
    <property type="term" value="F:imidazolonepropionase activity"/>
    <property type="evidence" value="ECO:0007669"/>
    <property type="project" value="UniProtKB-UniRule"/>
</dbReference>
<dbReference type="GO" id="GO:0005506">
    <property type="term" value="F:iron ion binding"/>
    <property type="evidence" value="ECO:0007669"/>
    <property type="project" value="UniProtKB-UniRule"/>
</dbReference>
<dbReference type="GO" id="GO:0008270">
    <property type="term" value="F:zinc ion binding"/>
    <property type="evidence" value="ECO:0007669"/>
    <property type="project" value="UniProtKB-UniRule"/>
</dbReference>
<dbReference type="GO" id="GO:0019556">
    <property type="term" value="P:L-histidine catabolic process to glutamate and formamide"/>
    <property type="evidence" value="ECO:0007669"/>
    <property type="project" value="UniProtKB-UniPathway"/>
</dbReference>
<dbReference type="GO" id="GO:0019557">
    <property type="term" value="P:L-histidine catabolic process to glutamate and formate"/>
    <property type="evidence" value="ECO:0007669"/>
    <property type="project" value="UniProtKB-UniPathway"/>
</dbReference>
<dbReference type="CDD" id="cd01296">
    <property type="entry name" value="Imidazolone-5PH"/>
    <property type="match status" value="1"/>
</dbReference>
<dbReference type="FunFam" id="3.20.20.140:FF:000007">
    <property type="entry name" value="Imidazolonepropionase"/>
    <property type="match status" value="1"/>
</dbReference>
<dbReference type="Gene3D" id="3.20.20.140">
    <property type="entry name" value="Metal-dependent hydrolases"/>
    <property type="match status" value="1"/>
</dbReference>
<dbReference type="Gene3D" id="2.30.40.10">
    <property type="entry name" value="Urease, subunit C, domain 1"/>
    <property type="match status" value="1"/>
</dbReference>
<dbReference type="HAMAP" id="MF_00372">
    <property type="entry name" value="HutI"/>
    <property type="match status" value="1"/>
</dbReference>
<dbReference type="InterPro" id="IPR006680">
    <property type="entry name" value="Amidohydro-rel"/>
</dbReference>
<dbReference type="InterPro" id="IPR005920">
    <property type="entry name" value="HutI"/>
</dbReference>
<dbReference type="InterPro" id="IPR011059">
    <property type="entry name" value="Metal-dep_hydrolase_composite"/>
</dbReference>
<dbReference type="InterPro" id="IPR032466">
    <property type="entry name" value="Metal_Hydrolase"/>
</dbReference>
<dbReference type="NCBIfam" id="TIGR01224">
    <property type="entry name" value="hutI"/>
    <property type="match status" value="1"/>
</dbReference>
<dbReference type="PANTHER" id="PTHR42752">
    <property type="entry name" value="IMIDAZOLONEPROPIONASE"/>
    <property type="match status" value="1"/>
</dbReference>
<dbReference type="PANTHER" id="PTHR42752:SF1">
    <property type="entry name" value="IMIDAZOLONEPROPIONASE-RELATED"/>
    <property type="match status" value="1"/>
</dbReference>
<dbReference type="Pfam" id="PF01979">
    <property type="entry name" value="Amidohydro_1"/>
    <property type="match status" value="1"/>
</dbReference>
<dbReference type="SUPFAM" id="SSF51338">
    <property type="entry name" value="Composite domain of metallo-dependent hydrolases"/>
    <property type="match status" value="1"/>
</dbReference>
<dbReference type="SUPFAM" id="SSF51556">
    <property type="entry name" value="Metallo-dependent hydrolases"/>
    <property type="match status" value="1"/>
</dbReference>
<feature type="chain" id="PRO_0000306531" description="Imidazolonepropionase">
    <location>
        <begin position="1"/>
        <end position="425"/>
    </location>
</feature>
<feature type="binding site" evidence="1">
    <location>
        <position position="82"/>
    </location>
    <ligand>
        <name>Fe(3+)</name>
        <dbReference type="ChEBI" id="CHEBI:29034"/>
    </ligand>
</feature>
<feature type="binding site" evidence="1">
    <location>
        <position position="82"/>
    </location>
    <ligand>
        <name>Zn(2+)</name>
        <dbReference type="ChEBI" id="CHEBI:29105"/>
    </ligand>
</feature>
<feature type="binding site" evidence="1">
    <location>
        <position position="84"/>
    </location>
    <ligand>
        <name>Fe(3+)</name>
        <dbReference type="ChEBI" id="CHEBI:29034"/>
    </ligand>
</feature>
<feature type="binding site" evidence="1">
    <location>
        <position position="84"/>
    </location>
    <ligand>
        <name>Zn(2+)</name>
        <dbReference type="ChEBI" id="CHEBI:29105"/>
    </ligand>
</feature>
<feature type="binding site" evidence="1">
    <location>
        <position position="91"/>
    </location>
    <ligand>
        <name>4-imidazolone-5-propanoate</name>
        <dbReference type="ChEBI" id="CHEBI:77893"/>
    </ligand>
</feature>
<feature type="binding site" evidence="1">
    <location>
        <position position="154"/>
    </location>
    <ligand>
        <name>4-imidazolone-5-propanoate</name>
        <dbReference type="ChEBI" id="CHEBI:77893"/>
    </ligand>
</feature>
<feature type="binding site" evidence="1">
    <location>
        <position position="154"/>
    </location>
    <ligand>
        <name>N-formimidoyl-L-glutamate</name>
        <dbReference type="ChEBI" id="CHEBI:58928"/>
    </ligand>
</feature>
<feature type="binding site" evidence="1">
    <location>
        <position position="187"/>
    </location>
    <ligand>
        <name>4-imidazolone-5-propanoate</name>
        <dbReference type="ChEBI" id="CHEBI:77893"/>
    </ligand>
</feature>
<feature type="binding site" evidence="1">
    <location>
        <position position="253"/>
    </location>
    <ligand>
        <name>Fe(3+)</name>
        <dbReference type="ChEBI" id="CHEBI:29034"/>
    </ligand>
</feature>
<feature type="binding site" evidence="1">
    <location>
        <position position="253"/>
    </location>
    <ligand>
        <name>Zn(2+)</name>
        <dbReference type="ChEBI" id="CHEBI:29105"/>
    </ligand>
</feature>
<feature type="binding site" evidence="1">
    <location>
        <position position="256"/>
    </location>
    <ligand>
        <name>4-imidazolone-5-propanoate</name>
        <dbReference type="ChEBI" id="CHEBI:77893"/>
    </ligand>
</feature>
<feature type="binding site" evidence="1">
    <location>
        <position position="328"/>
    </location>
    <ligand>
        <name>Fe(3+)</name>
        <dbReference type="ChEBI" id="CHEBI:29034"/>
    </ligand>
</feature>
<feature type="binding site" evidence="1">
    <location>
        <position position="328"/>
    </location>
    <ligand>
        <name>Zn(2+)</name>
        <dbReference type="ChEBI" id="CHEBI:29105"/>
    </ligand>
</feature>
<feature type="binding site" evidence="1">
    <location>
        <position position="330"/>
    </location>
    <ligand>
        <name>N-formimidoyl-L-glutamate</name>
        <dbReference type="ChEBI" id="CHEBI:58928"/>
    </ligand>
</feature>
<feature type="binding site" evidence="1">
    <location>
        <position position="332"/>
    </location>
    <ligand>
        <name>N-formimidoyl-L-glutamate</name>
        <dbReference type="ChEBI" id="CHEBI:58928"/>
    </ligand>
</feature>
<feature type="binding site" evidence="1">
    <location>
        <position position="333"/>
    </location>
    <ligand>
        <name>4-imidazolone-5-propanoate</name>
        <dbReference type="ChEBI" id="CHEBI:77893"/>
    </ligand>
</feature>